<name>FOXP3_MOUSE</name>
<accession>Q99JB6</accession>
<evidence type="ECO:0000250" key="1">
    <source>
        <dbReference type="UniProtKB" id="Q9BZS1"/>
    </source>
</evidence>
<evidence type="ECO:0000255" key="2">
    <source>
        <dbReference type="PROSITE-ProRule" id="PRU00089"/>
    </source>
</evidence>
<evidence type="ECO:0000256" key="3">
    <source>
        <dbReference type="SAM" id="MobiDB-lite"/>
    </source>
</evidence>
<evidence type="ECO:0000269" key="4">
    <source>
    </source>
</evidence>
<evidence type="ECO:0000269" key="5">
    <source>
    </source>
</evidence>
<evidence type="ECO:0000269" key="6">
    <source>
    </source>
</evidence>
<evidence type="ECO:0000269" key="7">
    <source>
    </source>
</evidence>
<evidence type="ECO:0000269" key="8">
    <source>
    </source>
</evidence>
<evidence type="ECO:0000269" key="9">
    <source>
    </source>
</evidence>
<evidence type="ECO:0000269" key="10">
    <source>
    </source>
</evidence>
<evidence type="ECO:0000269" key="11">
    <source>
    </source>
</evidence>
<evidence type="ECO:0000269" key="12">
    <source>
    </source>
</evidence>
<evidence type="ECO:0000269" key="13">
    <source>
    </source>
</evidence>
<evidence type="ECO:0000269" key="14">
    <source>
    </source>
</evidence>
<evidence type="ECO:0000305" key="15">
    <source>
    </source>
</evidence>
<evidence type="ECO:0007744" key="16">
    <source>
        <dbReference type="PDB" id="4I1L"/>
    </source>
</evidence>
<evidence type="ECO:0007829" key="17">
    <source>
        <dbReference type="PDB" id="4I1L"/>
    </source>
</evidence>
<evidence type="ECO:0007829" key="18">
    <source>
        <dbReference type="PDB" id="7TDX"/>
    </source>
</evidence>
<evidence type="ECO:0007829" key="19">
    <source>
        <dbReference type="PDB" id="8SRO"/>
    </source>
</evidence>
<comment type="function">
    <text evidence="1 4 6 7 9 11">Transcriptional regulator which is crucial for the development and inhibitory function of regulatory T-cells (Treg) (PubMed:22813742). Plays an essential role in maintaining homeostasis of the immune system by allowing the acquisition of full suppressive function and stability of the Treg lineage, and by directly modulating the expansion and function of conventional T-cells. Can act either as a transcriptional repressor or a transcriptional activator depending on its interactions with other transcription factors, histone acetylases and deacetylases. The suppressive activity of Treg involves the coordinate activation of many genes, including CTLA4 and TNFRSF18 by FOXP3 along with repression of genes encoding cytokines such as interleukin-2 (IL2) and interferon-gamma (IFNG). Inhibits cytokine production and T-cell effector function by repressing the activity of two key transcription factors, RELA and NFATC2 (PubMed:15790681). Mediates transcriptional repression of IL2 via its association with histone acetylase KAT5 and histone deacetylase HDAC7 (By similarity). Can activate the expression of TNFRSF18, IL2RA and CTLA4 and repress the expression of IL2 and IFNG via its association with transcription factor RUNX1 (PubMed:17377532). Inhibits the differentiation of IL17 producing helper T-cells (Th17) by antagonizing RORC function, leading to down-regulation of IL17 expression, favoring Treg development (PubMed:18368049). Inhibits the transcriptional activator activity of RORA (By similarity). Can repress the expression of IL2 and IFNG via its association with transcription factor IKZF4 (PubMed:19696312).</text>
</comment>
<comment type="subunit">
    <text evidence="1 5 6 7 9 11 14">Homodimer (PubMed:22813742). Dimerization is essential for its transcriptional regulator activity. Interacts with IKZF3 (By similarity). Interacts (via LXXLL motif) with isoform 4 of RORA (via AF-2 motif) (By similarity). Interacts with STUB1 and HSPA1A/B. Interacts with IKZF4, HDAC7 and KAT5. Interacts with RUNX1, RUNX2, RUNX3 and NFATC2. Interacts with RORC. Interacts with HDAC9 in the absence of T-cell stimulation (By similarity). Interacts with RELA, PPP1CA, PPP1CB, PPP1CG, HSPA8 and USP7 (By similarity).</text>
</comment>
<comment type="interaction">
    <interactant intactId="EBI-10956246">
        <id>Q99JB6</id>
    </interactant>
    <interactant intactId="EBI-3863873">
        <id>Q03347</id>
        <label>Runx1</label>
    </interactant>
    <organismsDiffer>false</organismsDiffer>
    <experiments>5</experiments>
</comment>
<comment type="interaction">
    <interactant intactId="EBI-10956246">
        <id>Q99JB6</id>
    </interactant>
    <interactant intactId="EBI-26303241">
        <id>Q8C2S0</id>
        <label>Usp44</label>
    </interactant>
    <organismsDiffer>false</organismsDiffer>
    <experiments>3</experiments>
</comment>
<comment type="subcellular location">
    <subcellularLocation>
        <location evidence="2 6 7">Nucleus</location>
    </subcellularLocation>
    <subcellularLocation>
        <location evidence="1">Cytoplasm</location>
    </subcellularLocation>
    <text evidence="1 8">Predominantly expressed in the cytoplasm in activated conventional T-cells whereas predominantly expressed in the nucleus in regulatory T-cells (Treg) (By similarity). The 41 kDa form derived by proteolytic processing is found exclusively in the chromatin fraction of activated Treg cells.</text>
</comment>
<comment type="tissue specificity">
    <text>High level of expression in thymus and spleen.</text>
</comment>
<comment type="induction">
    <text evidence="7 14">By TGFB1 in T-cells. Down-regulated in regulatory T-cells (Treg) during inflammation.</text>
</comment>
<comment type="domain">
    <text evidence="1">The fork-head DNA-binding domain is essential for its dimerization and interaction with NFATC2.</text>
</comment>
<comment type="PTM">
    <text evidence="1 10">Acetylation on lysine residues stabilizes FOXP3 and promotes differentiation of T-cells into induced regulatory T-cells (iTregs) associated with suppressive functions (PubMed:22312127). Acetylation is mediated by a coordinated action of KAT5 and EP300/p300 acetyltransferases: EP300/p300 is required to enhance KAT5 autoacetylation, promoting acetylation of FOXP3 by KAT5 (By similarity). Deacetylated by SIRT1 (PubMed:22312127).</text>
</comment>
<comment type="PTM">
    <text evidence="13 14">Polyubiquitinated, leading to its proteasomal degradation in regulatory T-cells (Treg) which is mediated by STUB1 in a HSPA1A/B-dependent manner. Deubiquitinated by USP7 and USP44 leading to increase in protein stability.</text>
</comment>
<comment type="PTM">
    <text evidence="1 12">Phosphorylation at Ser-418 regulates its transcriptional repressor activity and consequently, regulatory T-cells (Treg) suppressive function (By similarity). Phosphorylation by CDK2 negatively regulates its transcriptional activity and protein stability.</text>
</comment>
<comment type="PTM">
    <text evidence="8">Undergoes proteolytic cleavage in activated regulatory T-cells (Treg), and can be cleaved at either the N- or C-terminal site, or at both sites. Treg expressing the form cleaved at C-terminal site or both N- and C-terminal sites exhibit an increased induction of IL10 and an increased capacity to suppress proliferation of conventional T-cells in vitro. Treg expressing the form cleaved at only the C-terminal site are highly effective at preventing experimental colitis in an in vivo model of inflammatory bowel disease.</text>
</comment>
<comment type="disease">
    <text>Defects in Foxp3 are the cause of the scurfy phenotype (sf). It results in a lethal disorder of immunoregulation, characterized by infections, diarrhea, anemia, thrombocytopenia, hypogonadism, gastrointestinal bleeding, lymphadenopathy and leukocytosis.</text>
</comment>
<proteinExistence type="evidence at protein level"/>
<reference key="1">
    <citation type="journal article" date="2001" name="Nat. Genet.">
        <title>Disruption of a new forkhead/winged-helix protein, scurfin, results in the fatal lymphoproliferative disorder of the scurfy mouse.</title>
        <authorList>
            <person name="Brunkow M.E."/>
            <person name="Jeffery E.W."/>
            <person name="Hjerrild K.A."/>
            <person name="Paeper B."/>
            <person name="Clark L.B."/>
            <person name="Yasayko S.-A."/>
            <person name="Wilkinson J.E."/>
            <person name="Galas D."/>
            <person name="Ziegler S.F."/>
            <person name="Ramsdell F."/>
        </authorList>
    </citation>
    <scope>NUCLEOTIDE SEQUENCE [GENOMIC DNA / MRNA]</scope>
</reference>
<reference key="2">
    <citation type="journal article" date="2005" name="Proc. Natl. Acad. Sci. U.S.A.">
        <title>Foxp3 interacts with nuclear factor of activated T cells and NF-kappa B to repress cytokine gene expression and effector functions of T helper cells.</title>
        <authorList>
            <person name="Bettelli E."/>
            <person name="Dastrange M."/>
            <person name="Oukka M."/>
        </authorList>
    </citation>
    <scope>FUNCTION</scope>
</reference>
<reference key="3">
    <citation type="journal article" date="2006" name="Proc. Natl. Acad. Sci. U.S.A.">
        <title>The mutant leucine-zipper domain impairs both dimerization and suppressive function of Foxp3 in T cells.</title>
        <authorList>
            <person name="Chae W.J."/>
            <person name="Henegariu O."/>
            <person name="Lee S.K."/>
            <person name="Bothwell A.L."/>
        </authorList>
    </citation>
    <scope>HOMODIMERIZATION</scope>
    <scope>MUTAGENESIS OF GLU-250</scope>
</reference>
<reference key="4">
    <citation type="journal article" date="2007" name="Nature">
        <title>Foxp3 controls regulatory T-cell function by interacting with AML1/Runx1.</title>
        <authorList>
            <person name="Ono M."/>
            <person name="Yaguchi H."/>
            <person name="Ohkura N."/>
            <person name="Kitabayashi I."/>
            <person name="Nagamura Y."/>
            <person name="Nomura T."/>
            <person name="Miyachi Y."/>
            <person name="Tsukada T."/>
            <person name="Sakaguchi S."/>
        </authorList>
    </citation>
    <scope>FUNCTION</scope>
    <scope>INTERACTION WITH RUNX1; RUNX2; RUNX3 AND NFATC2</scope>
    <scope>SUBCELLULAR LOCATION</scope>
    <scope>MUTAGENESIS OF 329-ASP-TYR-330 AND LYS-332</scope>
</reference>
<reference key="5">
    <citation type="journal article" date="2008" name="Nature">
        <title>TGF-beta-induced Foxp3 inhibits T(H)17 cell differentiation by antagonizing RORgammat function.</title>
        <authorList>
            <person name="Zhou L."/>
            <person name="Lopes J.E."/>
            <person name="Chong M.M."/>
            <person name="Ivanov I.I."/>
            <person name="Min R."/>
            <person name="Victora G.D."/>
            <person name="Shen Y."/>
            <person name="Du J."/>
            <person name="Rubtsov Y.P."/>
            <person name="Rudensky A.Y."/>
            <person name="Ziegler S.F."/>
            <person name="Littman D.R."/>
        </authorList>
    </citation>
    <scope>FUNCTION</scope>
    <scope>SUBCELLULAR LOCATION</scope>
    <scope>INTERACTION WITH RORC</scope>
    <scope>INDUCTION</scope>
</reference>
<reference key="6">
    <citation type="journal article" date="2009" name="J. Biol. Chem.">
        <title>Foxp3 processing by proprotein convertases and control of regulatory T cell function.</title>
        <authorList>
            <person name="de Zoeten E.F."/>
            <person name="Lee I."/>
            <person name="Wang L."/>
            <person name="Chen C."/>
            <person name="Ge G."/>
            <person name="Wells A.D."/>
            <person name="Hancock W.W."/>
            <person name="Ozkaynak E."/>
        </authorList>
    </citation>
    <scope>PROTEOLYTIC PROCESSING</scope>
    <scope>SUBCELLULAR LOCATION</scope>
    <scope>MUTAGENESIS OF 48-ARG--ARG-51 AND 414-ARG--ARG-417</scope>
</reference>
<reference key="7">
    <citation type="journal article" date="2009" name="Science">
        <title>Eos mediates Foxp3-dependent gene silencing in CD4+ regulatory T cells.</title>
        <authorList>
            <person name="Pan F."/>
            <person name="Yu H."/>
            <person name="Dang E.V."/>
            <person name="Barbi J."/>
            <person name="Pan X."/>
            <person name="Grosso J.F."/>
            <person name="Jinasena D."/>
            <person name="Sharma S.M."/>
            <person name="McCadden E.M."/>
            <person name="Getnet D."/>
            <person name="Drake C.G."/>
            <person name="Liu J.O."/>
            <person name="Ostrowski M.C."/>
            <person name="Pardoll D.M."/>
        </authorList>
    </citation>
    <scope>FUNCTION</scope>
    <scope>INTERACTION WITH IKZF4; HDAC7 AND KAT5</scope>
</reference>
<reference key="8">
    <citation type="journal article" date="2012" name="J. Immunol.">
        <title>Three novel acetylation sites in the Foxp3 transcription factor regulate the suppressive activity of regulatory T cells.</title>
        <authorList>
            <person name="Kwon H.S."/>
            <person name="Lim H.W."/>
            <person name="Wu J."/>
            <person name="Schnolzer M."/>
            <person name="Verdin E."/>
            <person name="Ott M."/>
        </authorList>
    </citation>
    <scope>ACETYLATION AT LYS-31; LYS-262 AND LYS-267</scope>
    <scope>DEACETYLATION BY SIRT1</scope>
</reference>
<reference key="9">
    <citation type="journal article" date="2013" name="Immunity">
        <title>Stabilization of the transcription factor Foxp3 by the deubiquitinase USP7 increases Treg-cell-suppressive capacity.</title>
        <authorList>
            <person name="van Loosdregt J."/>
            <person name="Fleskens V."/>
            <person name="Fu J."/>
            <person name="Brenkman A.B."/>
            <person name="Bekker C.P."/>
            <person name="Pals C.E."/>
            <person name="Meerding J."/>
            <person name="Berkers C.R."/>
            <person name="Barbi J."/>
            <person name="Grone A."/>
            <person name="Sijts A.J."/>
            <person name="Maurice M.M."/>
            <person name="Kalkhoven E."/>
            <person name="Prakken B.J."/>
            <person name="Ovaa H."/>
            <person name="Pan F."/>
            <person name="Zaiss D.M."/>
            <person name="Coffer P.J."/>
        </authorList>
    </citation>
    <scope>UBIQUITINATION AT LYS-249; LYS-251; LYS-262; LYS-267 AND LYS-393</scope>
    <scope>DEUBIQUITINATION</scope>
</reference>
<reference key="10">
    <citation type="journal article" date="2013" name="Immunity">
        <title>The ubiquitin ligase Stub1 negatively modulates regulatory T cell suppressive activity by promoting degradation of the transcription factor Foxp3.</title>
        <authorList>
            <person name="Chen Z."/>
            <person name="Barbi J."/>
            <person name="Bu S."/>
            <person name="Yang H.Y."/>
            <person name="Li Z."/>
            <person name="Gao Y."/>
            <person name="Jinasena D."/>
            <person name="Fu J."/>
            <person name="Lin F."/>
            <person name="Chen C."/>
            <person name="Zhang J."/>
            <person name="Yu N."/>
            <person name="Li X."/>
            <person name="Shan Z."/>
            <person name="Nie J."/>
            <person name="Gao Z."/>
            <person name="Tian H."/>
            <person name="Li Y."/>
            <person name="Yao Z."/>
            <person name="Zheng Y."/>
            <person name="Park B.V."/>
            <person name="Pan Z."/>
            <person name="Zhang J."/>
            <person name="Dang E."/>
            <person name="Li Z."/>
            <person name="Wang H."/>
            <person name="Luo W."/>
            <person name="Li L."/>
            <person name="Semenza G.L."/>
            <person name="Zheng S.G."/>
            <person name="Loser K."/>
            <person name="Tsun A."/>
            <person name="Greene M.I."/>
            <person name="Pardoll D.M."/>
            <person name="Pan F."/>
            <person name="Li B."/>
        </authorList>
    </citation>
    <scope>UBIQUITINATION</scope>
    <scope>INTERACTION WITH STUB1 AND HSPA1A/B</scope>
    <scope>INDUCTION</scope>
</reference>
<reference key="11">
    <citation type="journal article" date="2013" name="J. Biol. Chem.">
        <title>Foxp3 protein stability is regulated by cyclin-dependent kinase 2.</title>
        <authorList>
            <person name="Morawski P.A."/>
            <person name="Mehra P."/>
            <person name="Chen C."/>
            <person name="Bhatti T."/>
            <person name="Wells A.D."/>
        </authorList>
    </citation>
    <scope>PHOSPHORYLATION AT SER-19 AND THR-175</scope>
    <scope>MUTAGENESIS OF SER-19; SER-88; THR-114 AND THR-175</scope>
</reference>
<reference key="12">
    <citation type="journal article" date="2014" name="Nat. Rev. Immunol.">
        <title>FOXP3 and scurfy: how it all began.</title>
        <authorList>
            <person name="Ramsdell F."/>
            <person name="Ziegler S.F."/>
        </authorList>
    </citation>
    <scope>REVIEW</scope>
</reference>
<reference evidence="16" key="13">
    <citation type="journal article" date="2012" name="Cell Rep.">
        <title>Structural and biological features of FOXP3 dimerization relevant to regulatory T cell function.</title>
        <authorList>
            <person name="Song X."/>
            <person name="Li B."/>
            <person name="Xiao Y."/>
            <person name="Chen C."/>
            <person name="Wang Q."/>
            <person name="Liu Y."/>
            <person name="Berezov A."/>
            <person name="Xu C."/>
            <person name="Gao Y."/>
            <person name="Li Z."/>
            <person name="Wu S.L."/>
            <person name="Cai Z."/>
            <person name="Zhang H."/>
            <person name="Karger B.L."/>
            <person name="Hancock W.W."/>
            <person name="Wells A.D."/>
            <person name="Zhou Z."/>
            <person name="Greene M.I."/>
        </authorList>
    </citation>
    <scope>X-RAY CRYSTALLOGRAPHY (2.10 ANGSTROMS) OF 189-276</scope>
    <scope>SUBUNIT</scope>
    <scope>FUNCTION</scope>
</reference>
<protein>
    <recommendedName>
        <fullName>Forkhead box protein P3</fullName>
    </recommendedName>
    <alternativeName>
        <fullName>Scurfin</fullName>
    </alternativeName>
    <component>
        <recommendedName>
            <fullName>Forkhead box protein P3, C-terminally processed</fullName>
        </recommendedName>
    </component>
    <component>
        <recommendedName>
            <fullName>Forkhead box protein P3 41 kDa form</fullName>
        </recommendedName>
    </component>
</protein>
<dbReference type="EMBL" id="AF277994">
    <property type="protein sequence ID" value="AAG53608.1"/>
    <property type="molecule type" value="Genomic_DNA"/>
</dbReference>
<dbReference type="EMBL" id="AF277991">
    <property type="protein sequence ID" value="AAG53605.1"/>
    <property type="molecule type" value="mRNA"/>
</dbReference>
<dbReference type="EMBL" id="AF277992">
    <property type="protein sequence ID" value="AAG53606.1"/>
    <property type="molecule type" value="mRNA"/>
</dbReference>
<dbReference type="CCDS" id="CCDS29965.1"/>
<dbReference type="RefSeq" id="NP_001186276.1">
    <property type="nucleotide sequence ID" value="NM_001199347.2"/>
</dbReference>
<dbReference type="RefSeq" id="NP_001186277.1">
    <property type="nucleotide sequence ID" value="NM_001199348.2"/>
</dbReference>
<dbReference type="RefSeq" id="NP_473380.1">
    <property type="nucleotide sequence ID" value="NM_054039.3"/>
</dbReference>
<dbReference type="PDB" id="4I1L">
    <property type="method" value="X-ray"/>
    <property type="resolution" value="2.10 A"/>
    <property type="chains" value="A=189-276"/>
</dbReference>
<dbReference type="PDB" id="7TDW">
    <property type="method" value="X-ray"/>
    <property type="resolution" value="4.00 A"/>
    <property type="chains" value="A=204-417"/>
</dbReference>
<dbReference type="PDB" id="7TDX">
    <property type="method" value="X-ray"/>
    <property type="resolution" value="3.10 A"/>
    <property type="chains" value="A=204-417"/>
</dbReference>
<dbReference type="PDB" id="8SRO">
    <property type="method" value="EM"/>
    <property type="resolution" value="3.30 A"/>
    <property type="chains" value="A/B/C/D=188-423"/>
</dbReference>
<dbReference type="PDB" id="8SRP">
    <property type="method" value="EM"/>
    <property type="resolution" value="3.70 A"/>
    <property type="chains" value="A/B/C/D/E/F/G/H/I/J=188-423"/>
</dbReference>
<dbReference type="PDBsum" id="4I1L"/>
<dbReference type="PDBsum" id="7TDW"/>
<dbReference type="PDBsum" id="7TDX"/>
<dbReference type="PDBsum" id="8SRO"/>
<dbReference type="PDBsum" id="8SRP"/>
<dbReference type="EMDB" id="EMD-40736"/>
<dbReference type="EMDB" id="EMD-40737"/>
<dbReference type="SMR" id="Q99JB6"/>
<dbReference type="BioGRID" id="203183">
    <property type="interactions" value="371"/>
</dbReference>
<dbReference type="DIP" id="DIP-59739N"/>
<dbReference type="FunCoup" id="Q99JB6">
    <property type="interactions" value="1117"/>
</dbReference>
<dbReference type="IntAct" id="Q99JB6">
    <property type="interactions" value="15"/>
</dbReference>
<dbReference type="MINT" id="Q99JB6"/>
<dbReference type="STRING" id="10090.ENSMUSP00000111405"/>
<dbReference type="GlyGen" id="Q99JB6">
    <property type="glycosylation" value="10 sites, 1 O-linked glycan (10 sites)"/>
</dbReference>
<dbReference type="iPTMnet" id="Q99JB6"/>
<dbReference type="PhosphoSitePlus" id="Q99JB6"/>
<dbReference type="PaxDb" id="10090-ENSMUSP00000111405"/>
<dbReference type="ProteomicsDB" id="267500"/>
<dbReference type="Antibodypedia" id="485">
    <property type="antibodies" value="2013 antibodies from 53 providers"/>
</dbReference>
<dbReference type="DNASU" id="20371"/>
<dbReference type="Ensembl" id="ENSMUST00000045566.7">
    <property type="protein sequence ID" value="ENSMUSP00000041953.7"/>
    <property type="gene ID" value="ENSMUSG00000039521.14"/>
</dbReference>
<dbReference type="Ensembl" id="ENSMUST00000115738.8">
    <property type="protein sequence ID" value="ENSMUSP00000111403.2"/>
    <property type="gene ID" value="ENSMUSG00000039521.14"/>
</dbReference>
<dbReference type="Ensembl" id="ENSMUST00000115739.9">
    <property type="protein sequence ID" value="ENSMUSP00000111404.2"/>
    <property type="gene ID" value="ENSMUSG00000039521.14"/>
</dbReference>
<dbReference type="Ensembl" id="ENSMUST00000115740.9">
    <property type="protein sequence ID" value="ENSMUSP00000111405.2"/>
    <property type="gene ID" value="ENSMUSG00000039521.14"/>
</dbReference>
<dbReference type="Ensembl" id="ENSMUST00000234363.2">
    <property type="protein sequence ID" value="ENSMUSP00000157093.2"/>
    <property type="gene ID" value="ENSMUSG00000039521.14"/>
</dbReference>
<dbReference type="Ensembl" id="ENSMUST00000235116.2">
    <property type="protein sequence ID" value="ENSMUSP00000157059.2"/>
    <property type="gene ID" value="ENSMUSG00000039521.14"/>
</dbReference>
<dbReference type="GeneID" id="20371"/>
<dbReference type="KEGG" id="mmu:20371"/>
<dbReference type="UCSC" id="uc009sll.2">
    <property type="organism name" value="mouse"/>
</dbReference>
<dbReference type="AGR" id="MGI:1891436"/>
<dbReference type="CTD" id="50943"/>
<dbReference type="MGI" id="MGI:1891436">
    <property type="gene designation" value="Foxp3"/>
</dbReference>
<dbReference type="VEuPathDB" id="HostDB:ENSMUSG00000039521"/>
<dbReference type="eggNOG" id="KOG4385">
    <property type="taxonomic scope" value="Eukaryota"/>
</dbReference>
<dbReference type="GeneTree" id="ENSGT00940000161807"/>
<dbReference type="HOGENOM" id="CLU_019502_1_0_1"/>
<dbReference type="InParanoid" id="Q99JB6"/>
<dbReference type="OMA" id="HCQVDHL"/>
<dbReference type="OrthoDB" id="5830876at2759"/>
<dbReference type="PhylomeDB" id="Q99JB6"/>
<dbReference type="TreeFam" id="TF326978"/>
<dbReference type="Reactome" id="R-MMU-8877330">
    <property type="pathway name" value="RUNX1 and FOXP3 control the development of regulatory T lymphocytes (Tregs)"/>
</dbReference>
<dbReference type="BioGRID-ORCS" id="20371">
    <property type="hits" value="5 hits in 122 CRISPR screens"/>
</dbReference>
<dbReference type="EvolutionaryTrace" id="Q99JB6"/>
<dbReference type="PRO" id="PR:Q99JB6"/>
<dbReference type="Proteomes" id="UP000000589">
    <property type="component" value="Chromosome X"/>
</dbReference>
<dbReference type="RNAct" id="Q99JB6">
    <property type="molecule type" value="protein"/>
</dbReference>
<dbReference type="Bgee" id="ENSMUSG00000039521">
    <property type="expression patterns" value="Expressed in urethra and 52 other cell types or tissues"/>
</dbReference>
<dbReference type="ExpressionAtlas" id="Q99JB6">
    <property type="expression patterns" value="baseline and differential"/>
</dbReference>
<dbReference type="GO" id="GO:0005737">
    <property type="term" value="C:cytoplasm"/>
    <property type="evidence" value="ECO:0000314"/>
    <property type="project" value="MGI"/>
</dbReference>
<dbReference type="GO" id="GO:0005829">
    <property type="term" value="C:cytosol"/>
    <property type="evidence" value="ECO:0007669"/>
    <property type="project" value="Ensembl"/>
</dbReference>
<dbReference type="GO" id="GO:0005654">
    <property type="term" value="C:nucleoplasm"/>
    <property type="evidence" value="ECO:0007669"/>
    <property type="project" value="Ensembl"/>
</dbReference>
<dbReference type="GO" id="GO:0005634">
    <property type="term" value="C:nucleus"/>
    <property type="evidence" value="ECO:0000314"/>
    <property type="project" value="UniProtKB"/>
</dbReference>
<dbReference type="GO" id="GO:0001228">
    <property type="term" value="F:DNA-binding transcription activator activity, RNA polymerase II-specific"/>
    <property type="evidence" value="ECO:0007669"/>
    <property type="project" value="Ensembl"/>
</dbReference>
<dbReference type="GO" id="GO:0003700">
    <property type="term" value="F:DNA-binding transcription factor activity"/>
    <property type="evidence" value="ECO:0000314"/>
    <property type="project" value="MGI"/>
</dbReference>
<dbReference type="GO" id="GO:0000981">
    <property type="term" value="F:DNA-binding transcription factor activity, RNA polymerase II-specific"/>
    <property type="evidence" value="ECO:0000314"/>
    <property type="project" value="MGI"/>
</dbReference>
<dbReference type="GO" id="GO:0035035">
    <property type="term" value="F:histone acetyltransferase binding"/>
    <property type="evidence" value="ECO:0007669"/>
    <property type="project" value="Ensembl"/>
</dbReference>
<dbReference type="GO" id="GO:0042826">
    <property type="term" value="F:histone deacetylase binding"/>
    <property type="evidence" value="ECO:0007669"/>
    <property type="project" value="Ensembl"/>
</dbReference>
<dbReference type="GO" id="GO:0042802">
    <property type="term" value="F:identical protein binding"/>
    <property type="evidence" value="ECO:0000353"/>
    <property type="project" value="MGI"/>
</dbReference>
<dbReference type="GO" id="GO:0051525">
    <property type="term" value="F:NFAT protein binding"/>
    <property type="evidence" value="ECO:0000250"/>
    <property type="project" value="UniProtKB"/>
</dbReference>
<dbReference type="GO" id="GO:0042803">
    <property type="term" value="F:protein homodimerization activity"/>
    <property type="evidence" value="ECO:0000250"/>
    <property type="project" value="UniProtKB"/>
</dbReference>
<dbReference type="GO" id="GO:0000978">
    <property type="term" value="F:RNA polymerase II cis-regulatory region sequence-specific DNA binding"/>
    <property type="evidence" value="ECO:0000314"/>
    <property type="project" value="UniProtKB"/>
</dbReference>
<dbReference type="GO" id="GO:0043565">
    <property type="term" value="F:sequence-specific DNA binding"/>
    <property type="evidence" value="ECO:0000314"/>
    <property type="project" value="MGI"/>
</dbReference>
<dbReference type="GO" id="GO:0003714">
    <property type="term" value="F:transcription corepressor activity"/>
    <property type="evidence" value="ECO:0000314"/>
    <property type="project" value="MGI"/>
</dbReference>
<dbReference type="GO" id="GO:0008270">
    <property type="term" value="F:zinc ion binding"/>
    <property type="evidence" value="ECO:0007669"/>
    <property type="project" value="UniProtKB-KW"/>
</dbReference>
<dbReference type="GO" id="GO:0046633">
    <property type="term" value="P:alpha-beta T cell proliferation"/>
    <property type="evidence" value="ECO:0000315"/>
    <property type="project" value="MGI"/>
</dbReference>
<dbReference type="GO" id="GO:0001782">
    <property type="term" value="P:B cell homeostasis"/>
    <property type="evidence" value="ECO:0000315"/>
    <property type="project" value="MGI"/>
</dbReference>
<dbReference type="GO" id="GO:0043367">
    <property type="term" value="P:CD4-positive, alpha-beta T cell differentiation"/>
    <property type="evidence" value="ECO:0000314"/>
    <property type="project" value="MGI"/>
</dbReference>
<dbReference type="GO" id="GO:0035739">
    <property type="term" value="P:CD4-positive, alpha-beta T cell proliferation"/>
    <property type="evidence" value="ECO:0000314"/>
    <property type="project" value="MGI"/>
</dbReference>
<dbReference type="GO" id="GO:0002361">
    <property type="term" value="P:CD4-positive, CD25-positive, alpha-beta regulatory T cell differentiation"/>
    <property type="evidence" value="ECO:0000315"/>
    <property type="project" value="MGI"/>
</dbReference>
<dbReference type="GO" id="GO:0002362">
    <property type="term" value="P:CD4-positive, CD25-positive, alpha-beta regulatory T cell lineage commitment"/>
    <property type="evidence" value="ECO:0000304"/>
    <property type="project" value="UniProtKB"/>
</dbReference>
<dbReference type="GO" id="GO:0006338">
    <property type="term" value="P:chromatin remodeling"/>
    <property type="evidence" value="ECO:0000314"/>
    <property type="project" value="MGI"/>
</dbReference>
<dbReference type="GO" id="GO:0006351">
    <property type="term" value="P:DNA-templated transcription"/>
    <property type="evidence" value="ECO:0000314"/>
    <property type="project" value="MGI"/>
</dbReference>
<dbReference type="GO" id="GO:0014045">
    <property type="term" value="P:establishment of endothelial blood-brain barrier"/>
    <property type="evidence" value="ECO:0007669"/>
    <property type="project" value="Ensembl"/>
</dbReference>
<dbReference type="GO" id="GO:0010467">
    <property type="term" value="P:gene expression"/>
    <property type="evidence" value="ECO:0000315"/>
    <property type="project" value="MGI"/>
</dbReference>
<dbReference type="GO" id="GO:0033080">
    <property type="term" value="P:immature T cell proliferation in thymus"/>
    <property type="evidence" value="ECO:0000315"/>
    <property type="project" value="MGI"/>
</dbReference>
<dbReference type="GO" id="GO:0006954">
    <property type="term" value="P:inflammatory response"/>
    <property type="evidence" value="ECO:0000315"/>
    <property type="project" value="MGI"/>
</dbReference>
<dbReference type="GO" id="GO:0048289">
    <property type="term" value="P:isotype switching to IgE isotypes"/>
    <property type="evidence" value="ECO:0000315"/>
    <property type="project" value="MGI"/>
</dbReference>
<dbReference type="GO" id="GO:0046651">
    <property type="term" value="P:lymphocyte proliferation"/>
    <property type="evidence" value="ECO:0000315"/>
    <property type="project" value="MGI"/>
</dbReference>
<dbReference type="GO" id="GO:0002262">
    <property type="term" value="P:myeloid cell homeostasis"/>
    <property type="evidence" value="ECO:0000315"/>
    <property type="project" value="MGI"/>
</dbReference>
<dbReference type="GO" id="GO:0046642">
    <property type="term" value="P:negative regulation of alpha-beta T cell proliferation"/>
    <property type="evidence" value="ECO:0000315"/>
    <property type="project" value="MGI"/>
</dbReference>
<dbReference type="GO" id="GO:2000562">
    <property type="term" value="P:negative regulation of CD4-positive, alpha-beta T cell proliferation"/>
    <property type="evidence" value="ECO:0000314"/>
    <property type="project" value="MGI"/>
</dbReference>
<dbReference type="GO" id="GO:0008285">
    <property type="term" value="P:negative regulation of cell population proliferation"/>
    <property type="evidence" value="ECO:0000250"/>
    <property type="project" value="UniProtKB"/>
</dbReference>
<dbReference type="GO" id="GO:0002677">
    <property type="term" value="P:negative regulation of chronic inflammatory response"/>
    <property type="evidence" value="ECO:0000314"/>
    <property type="project" value="MGI"/>
</dbReference>
<dbReference type="GO" id="GO:0032792">
    <property type="term" value="P:negative regulation of CREB transcription factor activity"/>
    <property type="evidence" value="ECO:0000250"/>
    <property type="project" value="UniProtKB"/>
</dbReference>
<dbReference type="GO" id="GO:0001818">
    <property type="term" value="P:negative regulation of cytokine production"/>
    <property type="evidence" value="ECO:0000250"/>
    <property type="project" value="UniProtKB"/>
</dbReference>
<dbReference type="GO" id="GO:0050687">
    <property type="term" value="P:negative regulation of defense response to virus"/>
    <property type="evidence" value="ECO:0007669"/>
    <property type="project" value="Ensembl"/>
</dbReference>
<dbReference type="GO" id="GO:0043433">
    <property type="term" value="P:negative regulation of DNA-binding transcription factor activity"/>
    <property type="evidence" value="ECO:0000250"/>
    <property type="project" value="UniProtKB"/>
</dbReference>
<dbReference type="GO" id="GO:0045892">
    <property type="term" value="P:negative regulation of DNA-templated transcription"/>
    <property type="evidence" value="ECO:0000314"/>
    <property type="project" value="MGI"/>
</dbReference>
<dbReference type="GO" id="GO:0010629">
    <property type="term" value="P:negative regulation of gene expression"/>
    <property type="evidence" value="ECO:0000314"/>
    <property type="project" value="MGI"/>
</dbReference>
<dbReference type="GO" id="GO:0050777">
    <property type="term" value="P:negative regulation of immune response"/>
    <property type="evidence" value="ECO:0000250"/>
    <property type="project" value="UniProtKB"/>
</dbReference>
<dbReference type="GO" id="GO:0050728">
    <property type="term" value="P:negative regulation of inflammatory response"/>
    <property type="evidence" value="ECO:0000315"/>
    <property type="project" value="MGI"/>
</dbReference>
<dbReference type="GO" id="GO:0032693">
    <property type="term" value="P:negative regulation of interleukin-10 production"/>
    <property type="evidence" value="ECO:0000315"/>
    <property type="project" value="MGI"/>
</dbReference>
<dbReference type="GO" id="GO:0032700">
    <property type="term" value="P:negative regulation of interleukin-17 production"/>
    <property type="evidence" value="ECO:0000315"/>
    <property type="project" value="UniProtKB"/>
</dbReference>
<dbReference type="GO" id="GO:0032703">
    <property type="term" value="P:negative regulation of interleukin-2 production"/>
    <property type="evidence" value="ECO:0000314"/>
    <property type="project" value="UniProtKB"/>
</dbReference>
<dbReference type="GO" id="GO:0032713">
    <property type="term" value="P:negative regulation of interleukin-4 production"/>
    <property type="evidence" value="ECO:0000314"/>
    <property type="project" value="MGI"/>
</dbReference>
<dbReference type="GO" id="GO:0032714">
    <property type="term" value="P:negative regulation of interleukin-5 production"/>
    <property type="evidence" value="ECO:0000314"/>
    <property type="project" value="MGI"/>
</dbReference>
<dbReference type="GO" id="GO:0032715">
    <property type="term" value="P:negative regulation of interleukin-6 production"/>
    <property type="evidence" value="ECO:0000315"/>
    <property type="project" value="MGI"/>
</dbReference>
<dbReference type="GO" id="GO:0048294">
    <property type="term" value="P:negative regulation of isotype switching to IgE isotypes"/>
    <property type="evidence" value="ECO:0000315"/>
    <property type="project" value="MGI"/>
</dbReference>
<dbReference type="GO" id="GO:0050672">
    <property type="term" value="P:negative regulation of lymphocyte proliferation"/>
    <property type="evidence" value="ECO:0000315"/>
    <property type="project" value="MGI"/>
</dbReference>
<dbReference type="GO" id="GO:0032088">
    <property type="term" value="P:negative regulation of NF-kappaB transcription factor activity"/>
    <property type="evidence" value="ECO:0000250"/>
    <property type="project" value="UniProtKB"/>
</dbReference>
<dbReference type="GO" id="GO:0002725">
    <property type="term" value="P:negative regulation of T cell cytokine production"/>
    <property type="evidence" value="ECO:0000250"/>
    <property type="project" value="UniProtKB"/>
</dbReference>
<dbReference type="GO" id="GO:0042130">
    <property type="term" value="P:negative regulation of T cell proliferation"/>
    <property type="evidence" value="ECO:0000314"/>
    <property type="project" value="MGI"/>
</dbReference>
<dbReference type="GO" id="GO:2000320">
    <property type="term" value="P:negative regulation of T-helper 17 cell differentiation"/>
    <property type="evidence" value="ECO:0000250"/>
    <property type="project" value="UniProtKB"/>
</dbReference>
<dbReference type="GO" id="GO:0000122">
    <property type="term" value="P:negative regulation of transcription by RNA polymerase II"/>
    <property type="evidence" value="ECO:0000314"/>
    <property type="project" value="MGI"/>
</dbReference>
<dbReference type="GO" id="GO:0032720">
    <property type="term" value="P:negative regulation of tumor necrosis factor production"/>
    <property type="evidence" value="ECO:0000315"/>
    <property type="project" value="MGI"/>
</dbReference>
<dbReference type="GO" id="GO:0032689">
    <property type="term" value="P:negative regulation of type II interferon production"/>
    <property type="evidence" value="ECO:0000314"/>
    <property type="project" value="UniProtKB"/>
</dbReference>
<dbReference type="GO" id="GO:0043372">
    <property type="term" value="P:positive regulation of CD4-positive, alpha-beta T cell differentiation"/>
    <property type="evidence" value="ECO:0000314"/>
    <property type="project" value="MGI"/>
</dbReference>
<dbReference type="GO" id="GO:0032831">
    <property type="term" value="P:positive regulation of CD4-positive, CD25-positive, alpha-beta regulatory T cell differentiation"/>
    <property type="evidence" value="ECO:0000315"/>
    <property type="project" value="MGI"/>
</dbReference>
<dbReference type="GO" id="GO:0045893">
    <property type="term" value="P:positive regulation of DNA-templated transcription"/>
    <property type="evidence" value="ECO:0000314"/>
    <property type="project" value="MGI"/>
</dbReference>
<dbReference type="GO" id="GO:0010628">
    <property type="term" value="P:positive regulation of gene expression"/>
    <property type="evidence" value="ECO:0000314"/>
    <property type="project" value="MGI"/>
</dbReference>
<dbReference type="GO" id="GO:0033092">
    <property type="term" value="P:positive regulation of immature T cell proliferation in thymus"/>
    <property type="evidence" value="ECO:0000315"/>
    <property type="project" value="MGI"/>
</dbReference>
<dbReference type="GO" id="GO:0032753">
    <property type="term" value="P:positive regulation of interleukin-4 production"/>
    <property type="evidence" value="ECO:0000315"/>
    <property type="project" value="MGI"/>
</dbReference>
<dbReference type="GO" id="GO:0002851">
    <property type="term" value="P:positive regulation of peripheral T cell tolerance induction"/>
    <property type="evidence" value="ECO:0000315"/>
    <property type="project" value="MGI"/>
</dbReference>
<dbReference type="GO" id="GO:0045591">
    <property type="term" value="P:positive regulation of regulatory T cell differentiation"/>
    <property type="evidence" value="ECO:0000314"/>
    <property type="project" value="MGI"/>
</dbReference>
<dbReference type="GO" id="GO:0002669">
    <property type="term" value="P:positive regulation of T cell anergy"/>
    <property type="evidence" value="ECO:0000315"/>
    <property type="project" value="MGI"/>
</dbReference>
<dbReference type="GO" id="GO:0002666">
    <property type="term" value="P:positive regulation of T cell tolerance induction"/>
    <property type="evidence" value="ECO:0000315"/>
    <property type="project" value="MGI"/>
</dbReference>
<dbReference type="GO" id="GO:0045944">
    <property type="term" value="P:positive regulation of transcription by RNA polymerase II"/>
    <property type="evidence" value="ECO:0000314"/>
    <property type="project" value="MGI"/>
</dbReference>
<dbReference type="GO" id="GO:0032914">
    <property type="term" value="P:positive regulation of transforming growth factor beta1 production"/>
    <property type="evidence" value="ECO:0000314"/>
    <property type="project" value="MGI"/>
</dbReference>
<dbReference type="GO" id="GO:0002637">
    <property type="term" value="P:regulation of immunoglobulin production"/>
    <property type="evidence" value="ECO:0000315"/>
    <property type="project" value="MGI"/>
</dbReference>
<dbReference type="GO" id="GO:0048302">
    <property type="term" value="P:regulation of isotype switching to IgG isotypes"/>
    <property type="evidence" value="ECO:0000315"/>
    <property type="project" value="MGI"/>
</dbReference>
<dbReference type="GO" id="GO:0002667">
    <property type="term" value="P:regulation of T cell anergy"/>
    <property type="evidence" value="ECO:0000315"/>
    <property type="project" value="UniProtKB"/>
</dbReference>
<dbReference type="GO" id="GO:0006357">
    <property type="term" value="P:regulation of transcription by RNA polymerase II"/>
    <property type="evidence" value="ECO:0000316"/>
    <property type="project" value="MGI"/>
</dbReference>
<dbReference type="GO" id="GO:0045066">
    <property type="term" value="P:regulatory T cell differentiation"/>
    <property type="evidence" value="ECO:0000314"/>
    <property type="project" value="MGI"/>
</dbReference>
<dbReference type="GO" id="GO:0032496">
    <property type="term" value="P:response to lipopolysaccharide"/>
    <property type="evidence" value="ECO:0007669"/>
    <property type="project" value="Ensembl"/>
</dbReference>
<dbReference type="GO" id="GO:1901355">
    <property type="term" value="P:response to rapamycin"/>
    <property type="evidence" value="ECO:0007669"/>
    <property type="project" value="Ensembl"/>
</dbReference>
<dbReference type="GO" id="GO:0009615">
    <property type="term" value="P:response to virus"/>
    <property type="evidence" value="ECO:0007669"/>
    <property type="project" value="Ensembl"/>
</dbReference>
<dbReference type="GO" id="GO:0042110">
    <property type="term" value="P:T cell activation"/>
    <property type="evidence" value="ECO:0000315"/>
    <property type="project" value="MGI"/>
</dbReference>
<dbReference type="GO" id="GO:0002870">
    <property type="term" value="P:T cell anergy"/>
    <property type="evidence" value="ECO:0000315"/>
    <property type="project" value="MGI"/>
</dbReference>
<dbReference type="GO" id="GO:0002456">
    <property type="term" value="P:T cell mediated immunity"/>
    <property type="evidence" value="ECO:0000315"/>
    <property type="project" value="MGI"/>
</dbReference>
<dbReference type="GO" id="GO:0042098">
    <property type="term" value="P:T cell proliferation"/>
    <property type="evidence" value="ECO:0000314"/>
    <property type="project" value="MGI"/>
</dbReference>
<dbReference type="GO" id="GO:0050852">
    <property type="term" value="P:T cell receptor signaling pathway"/>
    <property type="evidence" value="ECO:0000315"/>
    <property type="project" value="MGI"/>
</dbReference>
<dbReference type="GO" id="GO:0002517">
    <property type="term" value="P:T cell tolerance induction"/>
    <property type="evidence" value="ECO:0000315"/>
    <property type="project" value="MGI"/>
</dbReference>
<dbReference type="GO" id="GO:0002507">
    <property type="term" value="P:tolerance induction"/>
    <property type="evidence" value="ECO:0000314"/>
    <property type="project" value="MGI"/>
</dbReference>
<dbReference type="GO" id="GO:0002513">
    <property type="term" value="P:tolerance induction to self antigen"/>
    <property type="evidence" value="ECO:0000315"/>
    <property type="project" value="MGI"/>
</dbReference>
<dbReference type="GO" id="GO:0006366">
    <property type="term" value="P:transcription by RNA polymerase II"/>
    <property type="evidence" value="ECO:0000314"/>
    <property type="project" value="MGI"/>
</dbReference>
<dbReference type="GO" id="GO:0032905">
    <property type="term" value="P:transforming growth factor beta1 production"/>
    <property type="evidence" value="ECO:0000314"/>
    <property type="project" value="MGI"/>
</dbReference>
<dbReference type="CDD" id="cd20066">
    <property type="entry name" value="FH_FOXP3"/>
    <property type="match status" value="1"/>
</dbReference>
<dbReference type="FunFam" id="1.10.10.10:FF:000010">
    <property type="entry name" value="Forkhead box P2 isoform B"/>
    <property type="match status" value="1"/>
</dbReference>
<dbReference type="FunFam" id="1.20.5.340:FF:000024">
    <property type="entry name" value="Forkhead box P3, isoform CRA_b"/>
    <property type="match status" value="1"/>
</dbReference>
<dbReference type="Gene3D" id="1.20.5.340">
    <property type="match status" value="1"/>
</dbReference>
<dbReference type="Gene3D" id="1.10.10.10">
    <property type="entry name" value="Winged helix-like DNA-binding domain superfamily/Winged helix DNA-binding domain"/>
    <property type="match status" value="1"/>
</dbReference>
<dbReference type="InterPro" id="IPR047413">
    <property type="entry name" value="FH_FOXP3"/>
</dbReference>
<dbReference type="InterPro" id="IPR001766">
    <property type="entry name" value="Fork_head_dom"/>
</dbReference>
<dbReference type="InterPro" id="IPR050998">
    <property type="entry name" value="FOXP"/>
</dbReference>
<dbReference type="InterPro" id="IPR032354">
    <property type="entry name" value="FOXP-CC"/>
</dbReference>
<dbReference type="InterPro" id="IPR030456">
    <property type="entry name" value="TF_fork_head_CS_2"/>
</dbReference>
<dbReference type="InterPro" id="IPR036388">
    <property type="entry name" value="WH-like_DNA-bd_sf"/>
</dbReference>
<dbReference type="InterPro" id="IPR036390">
    <property type="entry name" value="WH_DNA-bd_sf"/>
</dbReference>
<dbReference type="InterPro" id="IPR013087">
    <property type="entry name" value="Znf_C2H2_type"/>
</dbReference>
<dbReference type="PANTHER" id="PTHR45796">
    <property type="entry name" value="FORKHEAD BOX P, ISOFORM C"/>
    <property type="match status" value="1"/>
</dbReference>
<dbReference type="PANTHER" id="PTHR45796:SF5">
    <property type="entry name" value="FORKHEAD BOX PROTEIN P3"/>
    <property type="match status" value="1"/>
</dbReference>
<dbReference type="Pfam" id="PF00250">
    <property type="entry name" value="Forkhead"/>
    <property type="match status" value="1"/>
</dbReference>
<dbReference type="Pfam" id="PF16159">
    <property type="entry name" value="FOXP-CC"/>
    <property type="match status" value="1"/>
</dbReference>
<dbReference type="PRINTS" id="PR00053">
    <property type="entry name" value="FORKHEAD"/>
</dbReference>
<dbReference type="SMART" id="SM00339">
    <property type="entry name" value="FH"/>
    <property type="match status" value="1"/>
</dbReference>
<dbReference type="SUPFAM" id="SSF46785">
    <property type="entry name" value="Winged helix' DNA-binding domain"/>
    <property type="match status" value="1"/>
</dbReference>
<dbReference type="PROSITE" id="PS00658">
    <property type="entry name" value="FORK_HEAD_2"/>
    <property type="match status" value="1"/>
</dbReference>
<dbReference type="PROSITE" id="PS50039">
    <property type="entry name" value="FORK_HEAD_3"/>
    <property type="match status" value="1"/>
</dbReference>
<dbReference type="PROSITE" id="PS00028">
    <property type="entry name" value="ZINC_FINGER_C2H2_1"/>
    <property type="match status" value="1"/>
</dbReference>
<sequence>MPNPRPAKPMAPSLALGPSPGVLPSWKTAPKGSELLGTRGSGGPFQGRDLRSGAHTSSSLNPLPPSQLQLPTVPLVMVAPSGARLGPSPHLQALLQDRPHFMHQLSTVDAHAQTPVLQVRPLDNPAMISLPPPSAATGVFSLKARPGLPPGINVASLEWVSREPALLCTFPRSGTPRKDSNLLAAPQGSYPLLANGVCKWPGCEKVFEEPEEFLKHCQADHLLDEKGKAQCLLQREVVQSLEQQLELEKEKLGAMQAHLAGKMALAKAPSVASMDKSSCCIVATSTQGSVLPAWSAPREAPDGGLFAVRRHLWGSHGNSSFPEFFHNMDYFKYHNMRPPFTYATLIRWAILEAPERQRTLNEIYHWFTRMFAYFRNHPATWKNAIRHNLSLHKCFVRVESEKGAVWTVDEFEFRKKRSQRPNKCSNPCP</sequence>
<feature type="chain" id="PRO_0000091888" description="Forkhead box protein P3">
    <location>
        <begin position="1"/>
        <end position="429"/>
    </location>
</feature>
<feature type="chain" id="PRO_0000432436" description="Forkhead box protein P3, C-terminally processed" evidence="15">
    <location>
        <begin position="1"/>
        <end position="417"/>
    </location>
</feature>
<feature type="chain" id="PRO_0000432437" description="Forkhead box protein P3 41 kDa form" evidence="15">
    <location>
        <begin position="52"/>
        <end position="417"/>
    </location>
</feature>
<feature type="propeptide" id="PRO_0000432438" evidence="15">
    <location>
        <begin position="418"/>
        <end position="429"/>
    </location>
</feature>
<feature type="zinc finger region" description="C2H2-type">
    <location>
        <begin position="196"/>
        <end position="221"/>
    </location>
</feature>
<feature type="DNA-binding region" description="Fork-head" evidence="2">
    <location>
        <begin position="337"/>
        <end position="423"/>
    </location>
</feature>
<feature type="region of interest" description="Disordered" evidence="3">
    <location>
        <begin position="1"/>
        <end position="67"/>
    </location>
</feature>
<feature type="region of interest" description="Essential for transcriptional repressor activity and for interaction with KAT5 and HDAC7" evidence="1">
    <location>
        <begin position="105"/>
        <end position="189"/>
    </location>
</feature>
<feature type="region of interest" description="Interaction with IKZF4" evidence="9">
    <location>
        <begin position="148"/>
        <end position="198"/>
    </location>
</feature>
<feature type="region of interest" description="Leucine-zipper">
    <location>
        <begin position="238"/>
        <end position="259"/>
    </location>
</feature>
<feature type="region of interest" description="Interaction with RUNX1" evidence="1">
    <location>
        <begin position="277"/>
        <end position="336"/>
    </location>
</feature>
<feature type="short sequence motif" description="Nuclear export signal" evidence="1">
    <location>
        <begin position="67"/>
        <end position="75"/>
    </location>
</feature>
<feature type="short sequence motif" description="LXXLL motif" evidence="1">
    <location>
        <begin position="91"/>
        <end position="95"/>
    </location>
</feature>
<feature type="short sequence motif" description="Nuclear export signal" evidence="1">
    <location>
        <begin position="238"/>
        <end position="247"/>
    </location>
</feature>
<feature type="short sequence motif" description="Nuclear localization signal" evidence="1">
    <location>
        <begin position="414"/>
        <end position="417"/>
    </location>
</feature>
<feature type="compositionally biased region" description="Low complexity" evidence="3">
    <location>
        <begin position="56"/>
        <end position="67"/>
    </location>
</feature>
<feature type="site" description="Cleavage" evidence="8">
    <location>
        <begin position="51"/>
        <end position="52"/>
    </location>
</feature>
<feature type="site" description="Cleavage; by PCSK1 or PCSK2" evidence="8">
    <location>
        <begin position="417"/>
        <end position="418"/>
    </location>
</feature>
<feature type="modified residue" description="Phosphoserine; by CDK2" evidence="12">
    <location>
        <position position="19"/>
    </location>
</feature>
<feature type="modified residue" description="N6-acetyllysine" evidence="10">
    <location>
        <position position="31"/>
    </location>
</feature>
<feature type="modified residue" description="Phosphothreonine; by CDK2" evidence="12">
    <location>
        <position position="175"/>
    </location>
</feature>
<feature type="modified residue" description="N6-acetyllysine; alternate" evidence="10">
    <location>
        <position position="262"/>
    </location>
</feature>
<feature type="modified residue" description="N6-acetyllysine; alternate" evidence="10">
    <location>
        <position position="267"/>
    </location>
</feature>
<feature type="modified residue" description="Phosphoserine" evidence="1">
    <location>
        <position position="418"/>
    </location>
</feature>
<feature type="cross-link" description="Glycyl lysine isopeptide (Lys-Gly) (interchain with G-Cter in ubiquitin)" evidence="13">
    <location>
        <position position="249"/>
    </location>
</feature>
<feature type="cross-link" description="Glycyl lysine isopeptide (Lys-Gly) (interchain with G-Cter in ubiquitin)" evidence="13">
    <location>
        <position position="251"/>
    </location>
</feature>
<feature type="cross-link" description="Glycyl lysine isopeptide (Lys-Gly) (interchain with G-Cter in ubiquitin); alternate" evidence="13">
    <location>
        <position position="262"/>
    </location>
</feature>
<feature type="cross-link" description="Glycyl lysine isopeptide (Lys-Gly) (interchain with G-Cter in ubiquitin); alternate" evidence="13">
    <location>
        <position position="267"/>
    </location>
</feature>
<feature type="cross-link" description="Glycyl lysine isopeptide (Lys-Gly) (interchain with G-Cter in ubiquitin)" evidence="13">
    <location>
        <position position="393"/>
    </location>
</feature>
<feature type="mutagenesis site" description="Loss of phosphorylation. Increase in protein stability, transcriptional activity and the ability to suppress the proliferation of conventional T-cells in vitro; when associated with A-88; A-114 and A-175." evidence="12">
    <original>S</original>
    <variation>A</variation>
    <location>
        <position position="19"/>
    </location>
</feature>
<feature type="mutagenesis site" description="Loss of proteolytic processing." evidence="8">
    <original>RDLR</original>
    <variation>HDLH</variation>
    <location>
        <begin position="48"/>
        <end position="51"/>
    </location>
</feature>
<feature type="mutagenesis site" description="Increase in protein stability, transcriptional activity and the ability to suppress the proliferation of conventional T-cells in vitro; when associated with A-19; A-114 and A-175." evidence="12">
    <original>S</original>
    <variation>A</variation>
    <location>
        <position position="88"/>
    </location>
</feature>
<feature type="mutagenesis site" description="Increase in protein stability, transcriptional activity and the ability to suppress the proliferation of conventional T-cells in vitro; when associated with A-19; A-88 and A-175." evidence="12">
    <original>T</original>
    <variation>A</variation>
    <location>
        <position position="114"/>
    </location>
</feature>
<feature type="mutagenesis site" description="Increase in protein stability, transcriptional activity and the ability to suppress the proliferation of conventional T-cells in vitro; when associated with A-19; A-88 and A-114." evidence="12">
    <original>T</original>
    <variation>A</variation>
    <location>
        <position position="175"/>
    </location>
</feature>
<feature type="mutagenesis site" description="Loss of homodimerization, decrease in transcriptional repressor activity, elimination of its Treg suppressor activity, defects in Th1 and Th2 cytokine secretion and down-regulation of cell surface markers on regulatory T-cells." evidence="5">
    <location>
        <position position="250"/>
    </location>
</feature>
<feature type="mutagenesis site" description="Reduced interaction with RUNX1, decrease in its ability to regulate the expression of IL2, TNFRSF18, IL2RA and CTLA4 in a RUNX1-dependent manner. Loss of interaction with RUNX1 but no effect on interaction with NFATC2 and loss of its ability to regulate the expression of IL2, TNFRSF18, IL2RA and CTLA4 in a RUNX1-dependent manner; when associated with L-332." evidence="6">
    <original>DY</original>
    <variation>VH</variation>
    <location>
        <begin position="329"/>
        <end position="330"/>
    </location>
</feature>
<feature type="mutagenesis site" description="Loss of interaction with RUNX1 but no effect on interaction with NFATC2 and loss of its ability to regulate the expression of IL2, TNFRSF18, IL2RA and CTLA4 in a RUNX1-dependent manner; when associated with 329-VH-330." evidence="6">
    <original>K</original>
    <variation>L</variation>
    <location>
        <position position="332"/>
    </location>
</feature>
<feature type="mutagenesis site" description="Loss of ability to suppress the proliferation of effector T-cells." evidence="8">
    <original>RKKR</original>
    <variation>PNNW</variation>
    <location>
        <begin position="414"/>
        <end position="417"/>
    </location>
</feature>
<feature type="mutagenesis site" description="Loss of proteolytic processing." evidence="8">
    <original>RKKR</original>
    <variation>QNKS</variation>
    <location>
        <begin position="414"/>
        <end position="417"/>
    </location>
</feature>
<feature type="turn" evidence="17">
    <location>
        <begin position="204"/>
        <end position="207"/>
    </location>
</feature>
<feature type="helix" evidence="17">
    <location>
        <begin position="208"/>
        <end position="257"/>
    </location>
</feature>
<feature type="helix" evidence="19">
    <location>
        <begin position="328"/>
        <end position="332"/>
    </location>
</feature>
<feature type="helix" evidence="18">
    <location>
        <begin position="342"/>
        <end position="352"/>
    </location>
</feature>
<feature type="helix" evidence="18">
    <location>
        <begin position="360"/>
        <end position="370"/>
    </location>
</feature>
<feature type="helix" evidence="18">
    <location>
        <begin position="373"/>
        <end position="375"/>
    </location>
</feature>
<feature type="helix" evidence="18">
    <location>
        <begin position="378"/>
        <end position="391"/>
    </location>
</feature>
<feature type="strand" evidence="18">
    <location>
        <begin position="395"/>
        <end position="399"/>
    </location>
</feature>
<feature type="strand" evidence="18">
    <location>
        <begin position="401"/>
        <end position="408"/>
    </location>
</feature>
<gene>
    <name type="primary">Foxp3</name>
</gene>
<keyword id="KW-0002">3D-structure</keyword>
<keyword id="KW-0007">Acetylation</keyword>
<keyword id="KW-0010">Activator</keyword>
<keyword id="KW-0963">Cytoplasm</keyword>
<keyword id="KW-0238">DNA-binding</keyword>
<keyword id="KW-1017">Isopeptide bond</keyword>
<keyword id="KW-0479">Metal-binding</keyword>
<keyword id="KW-0539">Nucleus</keyword>
<keyword id="KW-0597">Phosphoprotein</keyword>
<keyword id="KW-1185">Reference proteome</keyword>
<keyword id="KW-0678">Repressor</keyword>
<keyword id="KW-0804">Transcription</keyword>
<keyword id="KW-0805">Transcription regulation</keyword>
<keyword id="KW-0832">Ubl conjugation</keyword>
<keyword id="KW-0862">Zinc</keyword>
<keyword id="KW-0863">Zinc-finger</keyword>
<organism>
    <name type="scientific">Mus musculus</name>
    <name type="common">Mouse</name>
    <dbReference type="NCBI Taxonomy" id="10090"/>
    <lineage>
        <taxon>Eukaryota</taxon>
        <taxon>Metazoa</taxon>
        <taxon>Chordata</taxon>
        <taxon>Craniata</taxon>
        <taxon>Vertebrata</taxon>
        <taxon>Euteleostomi</taxon>
        <taxon>Mammalia</taxon>
        <taxon>Eutheria</taxon>
        <taxon>Euarchontoglires</taxon>
        <taxon>Glires</taxon>
        <taxon>Rodentia</taxon>
        <taxon>Myomorpha</taxon>
        <taxon>Muroidea</taxon>
        <taxon>Muridae</taxon>
        <taxon>Murinae</taxon>
        <taxon>Mus</taxon>
        <taxon>Mus</taxon>
    </lineage>
</organism>